<keyword id="KW-0413">Isomerase</keyword>
<keyword id="KW-0663">Pyridoxal phosphate</keyword>
<comment type="function">
    <text evidence="1">Catalyzes the interconversion of L-alanine and D-alanine. May also act on other amino acids.</text>
</comment>
<comment type="catalytic activity">
    <reaction evidence="1">
        <text>L-alanine = D-alanine</text>
        <dbReference type="Rhea" id="RHEA:20249"/>
        <dbReference type="ChEBI" id="CHEBI:57416"/>
        <dbReference type="ChEBI" id="CHEBI:57972"/>
        <dbReference type="EC" id="5.1.1.1"/>
    </reaction>
</comment>
<comment type="cofactor">
    <cofactor evidence="1">
        <name>pyridoxal 5'-phosphate</name>
        <dbReference type="ChEBI" id="CHEBI:597326"/>
    </cofactor>
</comment>
<comment type="pathway">
    <text evidence="1">Amino-acid biosynthesis; D-alanine biosynthesis; D-alanine from L-alanine: step 1/1.</text>
</comment>
<comment type="similarity">
    <text evidence="1">Belongs to the alanine racemase family.</text>
</comment>
<name>ALR_STRA3</name>
<sequence length="366" mass="40064">MISSYHRPTRALIDLEAIANNVKSVQEHIPSDKKTFAVVKANAYGHGAVEVSKYIESIVDGFCVSNLDEAIELRQAGIVKMILVLGVVMPEQVILAKNENITLTVASLEWLRLCQTSAVDLSGLEVHIKVDSGMGRIGVRQLDEGNKLISELGESGASVKGIFTHFATADEADNCKFNQQLTFFKDFISGLDNCPDLVHASNSATSLWHSETIFNAVRLGVVMYGLNPSGTDLDLPYPINPALSLESELVHVKQLHDGSQVGYGATYQVTGDEFVGTVPIGYADGWTRDMQGFSVIVNGELCEIIGRVSMDQMTIRLPQKYTIGTKVTLIGQQGSCNITTTDVAQKRQTINYEVLCLLSDRIPRYY</sequence>
<gene>
    <name type="primary">alr</name>
    <name type="ordered locus">gbs1728</name>
</gene>
<dbReference type="EC" id="5.1.1.1" evidence="1"/>
<dbReference type="EMBL" id="AL766852">
    <property type="protein sequence ID" value="CAD47387.1"/>
    <property type="molecule type" value="Genomic_DNA"/>
</dbReference>
<dbReference type="RefSeq" id="WP_000625941.1">
    <property type="nucleotide sequence ID" value="NC_004368.1"/>
</dbReference>
<dbReference type="SMR" id="Q8E3M9"/>
<dbReference type="KEGG" id="san:gbs1728"/>
<dbReference type="eggNOG" id="COG0787">
    <property type="taxonomic scope" value="Bacteria"/>
</dbReference>
<dbReference type="HOGENOM" id="CLU_028393_2_1_9"/>
<dbReference type="UniPathway" id="UPA00042">
    <property type="reaction ID" value="UER00497"/>
</dbReference>
<dbReference type="Proteomes" id="UP000000823">
    <property type="component" value="Chromosome"/>
</dbReference>
<dbReference type="GO" id="GO:0005829">
    <property type="term" value="C:cytosol"/>
    <property type="evidence" value="ECO:0007669"/>
    <property type="project" value="TreeGrafter"/>
</dbReference>
<dbReference type="GO" id="GO:0008784">
    <property type="term" value="F:alanine racemase activity"/>
    <property type="evidence" value="ECO:0007669"/>
    <property type="project" value="UniProtKB-UniRule"/>
</dbReference>
<dbReference type="GO" id="GO:0030170">
    <property type="term" value="F:pyridoxal phosphate binding"/>
    <property type="evidence" value="ECO:0007669"/>
    <property type="project" value="UniProtKB-UniRule"/>
</dbReference>
<dbReference type="GO" id="GO:0030632">
    <property type="term" value="P:D-alanine biosynthetic process"/>
    <property type="evidence" value="ECO:0007669"/>
    <property type="project" value="UniProtKB-UniRule"/>
</dbReference>
<dbReference type="GO" id="GO:0009252">
    <property type="term" value="P:peptidoglycan biosynthetic process"/>
    <property type="evidence" value="ECO:0007669"/>
    <property type="project" value="TreeGrafter"/>
</dbReference>
<dbReference type="CDD" id="cd00430">
    <property type="entry name" value="PLPDE_III_AR"/>
    <property type="match status" value="1"/>
</dbReference>
<dbReference type="FunFam" id="2.40.37.10:FF:000006">
    <property type="entry name" value="Alanine racemase"/>
    <property type="match status" value="1"/>
</dbReference>
<dbReference type="FunFam" id="3.20.20.10:FF:000002">
    <property type="entry name" value="Alanine racemase"/>
    <property type="match status" value="1"/>
</dbReference>
<dbReference type="Gene3D" id="3.20.20.10">
    <property type="entry name" value="Alanine racemase"/>
    <property type="match status" value="1"/>
</dbReference>
<dbReference type="Gene3D" id="2.40.37.10">
    <property type="entry name" value="Lyase, Ornithine Decarboxylase, Chain A, domain 1"/>
    <property type="match status" value="1"/>
</dbReference>
<dbReference type="HAMAP" id="MF_01201">
    <property type="entry name" value="Ala_racemase"/>
    <property type="match status" value="1"/>
</dbReference>
<dbReference type="InterPro" id="IPR000821">
    <property type="entry name" value="Ala_racemase"/>
</dbReference>
<dbReference type="InterPro" id="IPR009006">
    <property type="entry name" value="Ala_racemase/Decarboxylase_C"/>
</dbReference>
<dbReference type="InterPro" id="IPR011079">
    <property type="entry name" value="Ala_racemase_C"/>
</dbReference>
<dbReference type="InterPro" id="IPR001608">
    <property type="entry name" value="Ala_racemase_N"/>
</dbReference>
<dbReference type="InterPro" id="IPR020622">
    <property type="entry name" value="Ala_racemase_pyridoxalP-BS"/>
</dbReference>
<dbReference type="InterPro" id="IPR029066">
    <property type="entry name" value="PLP-binding_barrel"/>
</dbReference>
<dbReference type="NCBIfam" id="TIGR00492">
    <property type="entry name" value="alr"/>
    <property type="match status" value="1"/>
</dbReference>
<dbReference type="PANTHER" id="PTHR30511">
    <property type="entry name" value="ALANINE RACEMASE"/>
    <property type="match status" value="1"/>
</dbReference>
<dbReference type="PANTHER" id="PTHR30511:SF0">
    <property type="entry name" value="ALANINE RACEMASE, CATABOLIC-RELATED"/>
    <property type="match status" value="1"/>
</dbReference>
<dbReference type="Pfam" id="PF00842">
    <property type="entry name" value="Ala_racemase_C"/>
    <property type="match status" value="1"/>
</dbReference>
<dbReference type="Pfam" id="PF01168">
    <property type="entry name" value="Ala_racemase_N"/>
    <property type="match status" value="1"/>
</dbReference>
<dbReference type="PRINTS" id="PR00992">
    <property type="entry name" value="ALARACEMASE"/>
</dbReference>
<dbReference type="SMART" id="SM01005">
    <property type="entry name" value="Ala_racemase_C"/>
    <property type="match status" value="1"/>
</dbReference>
<dbReference type="SUPFAM" id="SSF50621">
    <property type="entry name" value="Alanine racemase C-terminal domain-like"/>
    <property type="match status" value="1"/>
</dbReference>
<dbReference type="SUPFAM" id="SSF51419">
    <property type="entry name" value="PLP-binding barrel"/>
    <property type="match status" value="1"/>
</dbReference>
<dbReference type="PROSITE" id="PS00395">
    <property type="entry name" value="ALANINE_RACEMASE"/>
    <property type="match status" value="1"/>
</dbReference>
<proteinExistence type="inferred from homology"/>
<organism>
    <name type="scientific">Streptococcus agalactiae serotype III (strain NEM316)</name>
    <dbReference type="NCBI Taxonomy" id="211110"/>
    <lineage>
        <taxon>Bacteria</taxon>
        <taxon>Bacillati</taxon>
        <taxon>Bacillota</taxon>
        <taxon>Bacilli</taxon>
        <taxon>Lactobacillales</taxon>
        <taxon>Streptococcaceae</taxon>
        <taxon>Streptococcus</taxon>
    </lineage>
</organism>
<reference key="1">
    <citation type="journal article" date="2002" name="Mol. Microbiol.">
        <title>Genome sequence of Streptococcus agalactiae, a pathogen causing invasive neonatal disease.</title>
        <authorList>
            <person name="Glaser P."/>
            <person name="Rusniok C."/>
            <person name="Buchrieser C."/>
            <person name="Chevalier F."/>
            <person name="Frangeul L."/>
            <person name="Msadek T."/>
            <person name="Zouine M."/>
            <person name="Couve E."/>
            <person name="Lalioui L."/>
            <person name="Poyart C."/>
            <person name="Trieu-Cuot P."/>
            <person name="Kunst F."/>
        </authorList>
    </citation>
    <scope>NUCLEOTIDE SEQUENCE [LARGE SCALE GENOMIC DNA]</scope>
    <source>
        <strain>NEM316</strain>
    </source>
</reference>
<feature type="chain" id="PRO_1000066042" description="Alanine racemase">
    <location>
        <begin position="1"/>
        <end position="366"/>
    </location>
</feature>
<feature type="active site" description="Proton acceptor; specific for D-alanine" evidence="1">
    <location>
        <position position="40"/>
    </location>
</feature>
<feature type="active site" description="Proton acceptor; specific for L-alanine" evidence="1">
    <location>
        <position position="263"/>
    </location>
</feature>
<feature type="binding site" evidence="1">
    <location>
        <position position="136"/>
    </location>
    <ligand>
        <name>substrate</name>
    </ligand>
</feature>
<feature type="binding site" evidence="1">
    <location>
        <position position="310"/>
    </location>
    <ligand>
        <name>substrate</name>
    </ligand>
</feature>
<feature type="modified residue" description="N6-(pyridoxal phosphate)lysine" evidence="1">
    <location>
        <position position="40"/>
    </location>
</feature>
<evidence type="ECO:0000255" key="1">
    <source>
        <dbReference type="HAMAP-Rule" id="MF_01201"/>
    </source>
</evidence>
<protein>
    <recommendedName>
        <fullName evidence="1">Alanine racemase</fullName>
        <ecNumber evidence="1">5.1.1.1</ecNumber>
    </recommendedName>
</protein>
<accession>Q8E3M9</accession>